<organism>
    <name type="scientific">Rhodococcus jostii (strain RHA1)</name>
    <dbReference type="NCBI Taxonomy" id="101510"/>
    <lineage>
        <taxon>Bacteria</taxon>
        <taxon>Bacillati</taxon>
        <taxon>Actinomycetota</taxon>
        <taxon>Actinomycetes</taxon>
        <taxon>Mycobacteriales</taxon>
        <taxon>Nocardiaceae</taxon>
        <taxon>Rhodococcus</taxon>
    </lineage>
</organism>
<comment type="function">
    <text evidence="1">Na(+)/H(+) antiporter that extrudes sodium in exchange for external protons.</text>
</comment>
<comment type="catalytic activity">
    <reaction evidence="1">
        <text>Na(+)(in) + 2 H(+)(out) = Na(+)(out) + 2 H(+)(in)</text>
        <dbReference type="Rhea" id="RHEA:29251"/>
        <dbReference type="ChEBI" id="CHEBI:15378"/>
        <dbReference type="ChEBI" id="CHEBI:29101"/>
    </reaction>
    <physiologicalReaction direction="left-to-right" evidence="1">
        <dbReference type="Rhea" id="RHEA:29252"/>
    </physiologicalReaction>
</comment>
<comment type="subcellular location">
    <subcellularLocation>
        <location evidence="1">Cell membrane</location>
        <topology evidence="1">Multi-pass membrane protein</topology>
    </subcellularLocation>
</comment>
<comment type="similarity">
    <text evidence="1">Belongs to the NhaA Na(+)/H(+) (TC 2.A.33) antiporter family.</text>
</comment>
<keyword id="KW-0050">Antiport</keyword>
<keyword id="KW-1003">Cell membrane</keyword>
<keyword id="KW-0406">Ion transport</keyword>
<keyword id="KW-0472">Membrane</keyword>
<keyword id="KW-0915">Sodium</keyword>
<keyword id="KW-0739">Sodium transport</keyword>
<keyword id="KW-0812">Transmembrane</keyword>
<keyword id="KW-1133">Transmembrane helix</keyword>
<keyword id="KW-0813">Transport</keyword>
<accession>Q0S8L7</accession>
<feature type="chain" id="PRO_0000334391" description="Na(+)/H(+) antiporter NhaA 2">
    <location>
        <begin position="1"/>
        <end position="411"/>
    </location>
</feature>
<feature type="transmembrane region" description="Helical" evidence="1">
    <location>
        <begin position="18"/>
        <end position="38"/>
    </location>
</feature>
<feature type="transmembrane region" description="Helical" evidence="1">
    <location>
        <begin position="59"/>
        <end position="79"/>
    </location>
</feature>
<feature type="transmembrane region" description="Helical" evidence="1">
    <location>
        <begin position="97"/>
        <end position="117"/>
    </location>
</feature>
<feature type="transmembrane region" description="Helical" evidence="1">
    <location>
        <begin position="127"/>
        <end position="147"/>
    </location>
</feature>
<feature type="transmembrane region" description="Helical" evidence="1">
    <location>
        <begin position="167"/>
        <end position="187"/>
    </location>
</feature>
<feature type="transmembrane region" description="Helical" evidence="1">
    <location>
        <begin position="218"/>
        <end position="238"/>
    </location>
</feature>
<feature type="transmembrane region" description="Helical" evidence="1">
    <location>
        <begin position="261"/>
        <end position="281"/>
    </location>
</feature>
<feature type="transmembrane region" description="Helical" evidence="1">
    <location>
        <begin position="297"/>
        <end position="317"/>
    </location>
</feature>
<feature type="transmembrane region" description="Helical" evidence="1">
    <location>
        <begin position="338"/>
        <end position="358"/>
    </location>
</feature>
<feature type="transmembrane region" description="Helical" evidence="1">
    <location>
        <begin position="366"/>
        <end position="386"/>
    </location>
</feature>
<dbReference type="EMBL" id="CP000431">
    <property type="protein sequence ID" value="ABG96119.1"/>
    <property type="molecule type" value="Genomic_DNA"/>
</dbReference>
<dbReference type="RefSeq" id="WP_011596766.1">
    <property type="nucleotide sequence ID" value="NC_008268.1"/>
</dbReference>
<dbReference type="SMR" id="Q0S8L7"/>
<dbReference type="KEGG" id="rha:RHA1_ro04329"/>
<dbReference type="PATRIC" id="fig|101510.16.peg.4357"/>
<dbReference type="eggNOG" id="COG3004">
    <property type="taxonomic scope" value="Bacteria"/>
</dbReference>
<dbReference type="HOGENOM" id="CLU_015803_0_0_11"/>
<dbReference type="OrthoDB" id="9808135at2"/>
<dbReference type="Proteomes" id="UP000008710">
    <property type="component" value="Chromosome"/>
</dbReference>
<dbReference type="GO" id="GO:0005886">
    <property type="term" value="C:plasma membrane"/>
    <property type="evidence" value="ECO:0007669"/>
    <property type="project" value="UniProtKB-SubCell"/>
</dbReference>
<dbReference type="GO" id="GO:0015385">
    <property type="term" value="F:sodium:proton antiporter activity"/>
    <property type="evidence" value="ECO:0007669"/>
    <property type="project" value="TreeGrafter"/>
</dbReference>
<dbReference type="GO" id="GO:0006885">
    <property type="term" value="P:regulation of pH"/>
    <property type="evidence" value="ECO:0007669"/>
    <property type="project" value="InterPro"/>
</dbReference>
<dbReference type="Gene3D" id="1.20.1530.10">
    <property type="entry name" value="Na+/H+ antiporter like domain"/>
    <property type="match status" value="1"/>
</dbReference>
<dbReference type="HAMAP" id="MF_01844">
    <property type="entry name" value="NhaA"/>
    <property type="match status" value="1"/>
</dbReference>
<dbReference type="InterPro" id="IPR023171">
    <property type="entry name" value="Na/H_antiporter_dom_sf"/>
</dbReference>
<dbReference type="InterPro" id="IPR004670">
    <property type="entry name" value="NhaA"/>
</dbReference>
<dbReference type="NCBIfam" id="TIGR00773">
    <property type="entry name" value="NhaA"/>
    <property type="match status" value="1"/>
</dbReference>
<dbReference type="PANTHER" id="PTHR30341:SF0">
    <property type="entry name" value="NA(+)_H(+) ANTIPORTER NHAA"/>
    <property type="match status" value="1"/>
</dbReference>
<dbReference type="PANTHER" id="PTHR30341">
    <property type="entry name" value="SODIUM ION/PROTON ANTIPORTER NHAA-RELATED"/>
    <property type="match status" value="1"/>
</dbReference>
<dbReference type="Pfam" id="PF06965">
    <property type="entry name" value="Na_H_antiport_1"/>
    <property type="match status" value="1"/>
</dbReference>
<proteinExistence type="inferred from homology"/>
<protein>
    <recommendedName>
        <fullName evidence="1">Na(+)/H(+) antiporter NhaA 2</fullName>
    </recommendedName>
    <alternativeName>
        <fullName evidence="1">Sodium/proton antiporter NhaA 2</fullName>
    </alternativeName>
</protein>
<reference key="1">
    <citation type="journal article" date="2006" name="Proc. Natl. Acad. Sci. U.S.A.">
        <title>The complete genome of Rhodococcus sp. RHA1 provides insights into a catabolic powerhouse.</title>
        <authorList>
            <person name="McLeod M.P."/>
            <person name="Warren R.L."/>
            <person name="Hsiao W.W.L."/>
            <person name="Araki N."/>
            <person name="Myhre M."/>
            <person name="Fernandes C."/>
            <person name="Miyazawa D."/>
            <person name="Wong W."/>
            <person name="Lillquist A.L."/>
            <person name="Wang D."/>
            <person name="Dosanjh M."/>
            <person name="Hara H."/>
            <person name="Petrescu A."/>
            <person name="Morin R.D."/>
            <person name="Yang G."/>
            <person name="Stott J.M."/>
            <person name="Schein J.E."/>
            <person name="Shin H."/>
            <person name="Smailus D."/>
            <person name="Siddiqui A.S."/>
            <person name="Marra M.A."/>
            <person name="Jones S.J.M."/>
            <person name="Holt R."/>
            <person name="Brinkman F.S.L."/>
            <person name="Miyauchi K."/>
            <person name="Fukuda M."/>
            <person name="Davies J.E."/>
            <person name="Mohn W.W."/>
            <person name="Eltis L.D."/>
        </authorList>
    </citation>
    <scope>NUCLEOTIDE SEQUENCE [LARGE SCALE GENOMIC DNA]</scope>
    <source>
        <strain>RHA1</strain>
    </source>
</reference>
<gene>
    <name evidence="1" type="primary">nhaA2</name>
    <name type="ordered locus">RHA1_ro04329</name>
</gene>
<name>NHAA2_RHOJR</name>
<evidence type="ECO:0000255" key="1">
    <source>
        <dbReference type="HAMAP-Rule" id="MF_01844"/>
    </source>
</evidence>
<sequence length="411" mass="43175">MTQPFRSELSRYLRTATVGGSILLIAAAIALVWANSPVSDSYFALRDWQIGPQALHLNLTVGTWAQDGLLAVFFFVAGLELKRELVVGELADRKRALLPIIAACGGVVVPAIIAATIGAGTPGMDRGWAIPVATDIAFALGVLALTGSRIPTSARVFLLSLAVVDDLLAIVLIAVLFTSSIALLWLLGAIACLAVYAFAQHRRITTPLLYVPLALLTWYCMHDAGIHATLAGVALGLLTRVRRDPGERESPASRLEHRIQPLSAGVCVPVFALFASGVALSSELLGQLFTNPISQSVIAGLLVGKTVGIFGISWLAIRLGIAKKPRALGFRDMFALSVLGAIGFTVSLLVADLALAGIGDGSEAEIAKVAVLVTSLTASLIGSALLWRRGRAHAARKDDSDVQELPGGVDK</sequence>